<feature type="initiator methionine" description="Removed" evidence="5 10 11">
    <location>
        <position position="1"/>
    </location>
</feature>
<feature type="chain" id="PRO_0000177032" description="Sideroflexin-1">
    <location>
        <begin position="2"/>
        <end position="322"/>
    </location>
</feature>
<feature type="topological domain" description="Mitochondrial matrix" evidence="7 8">
    <location>
        <begin position="2"/>
        <end position="102"/>
    </location>
</feature>
<feature type="transmembrane region" description="Helical" evidence="2">
    <location>
        <begin position="103"/>
        <end position="120"/>
    </location>
</feature>
<feature type="topological domain" description="Mitochondrial intermembrane" evidence="6">
    <location>
        <begin position="121"/>
        <end position="146"/>
    </location>
</feature>
<feature type="transmembrane region" description="Helical" evidence="2">
    <location>
        <begin position="147"/>
        <end position="167"/>
    </location>
</feature>
<feature type="topological domain" description="Mitochondrial matrix" evidence="6">
    <location>
        <begin position="168"/>
        <end position="174"/>
    </location>
</feature>
<feature type="transmembrane region" description="Helical" evidence="2">
    <location>
        <begin position="175"/>
        <end position="195"/>
    </location>
</feature>
<feature type="topological domain" description="Mitochondrial intermembrane" evidence="6">
    <location>
        <begin position="196"/>
        <end position="228"/>
    </location>
</feature>
<feature type="transmembrane region" description="Helical" evidence="2">
    <location>
        <begin position="229"/>
        <end position="249"/>
    </location>
</feature>
<feature type="topological domain" description="Mitochondrial matrix" evidence="6">
    <location>
        <begin position="250"/>
        <end position="266"/>
    </location>
</feature>
<feature type="transmembrane region" description="Helical" evidence="2">
    <location>
        <begin position="267"/>
        <end position="287"/>
    </location>
</feature>
<feature type="topological domain" description="Mitochondrial intermembrane" evidence="7 8">
    <location>
        <begin position="288"/>
        <end position="322"/>
    </location>
</feature>
<feature type="modified residue" description="N-acetylserine" evidence="5 10 11">
    <location>
        <position position="2"/>
    </location>
</feature>
<feature type="sequence variant" id="VAR_051966" description="In dbSNP:rs17065105.">
    <original>N</original>
    <variation>S</variation>
    <location>
        <position position="26"/>
    </location>
</feature>
<feature type="sequence variant" id="VAR_051967" description="In dbSNP:rs34907038.">
    <original>P</original>
    <variation>S</variation>
    <location>
        <position position="266"/>
    </location>
</feature>
<feature type="sequence conflict" description="In Ref. 2; BAB14318." evidence="6" ref="2">
    <original>Y</original>
    <variation>K</variation>
    <location>
        <position position="73"/>
    </location>
</feature>
<sequence length="322" mass="35619">MSGELPPNINIKEPRWDQSTFIGRANHFFTVTDPRNILLTNEQLESARKIVHDYRQGIVPPGLTENELWRAKYIYDSAFHPDTGEKMILIGRMSAQVPMNMTITGCMMTFYRTTPAVLFWQWINQSFNAVVNYTNRSGDAPLTVNELGTAYVSATTGAVATALGLNALTKHVSPLIGRFVPFAAVAAANCINIPLMRQRELKVGIPVTDENGNRLGESANAAKQAITQVVVSRILMAAPGMAIPPFIMNTLEKKAFLKRFPWMSAPIQVGLVGFCLVFATPLCCALFPQKSSMSVTSLEAELQAKIQESHPELRRVYFNKGL</sequence>
<proteinExistence type="evidence at protein level"/>
<evidence type="ECO:0000250" key="1">
    <source>
        <dbReference type="UniProtKB" id="Q99JR1"/>
    </source>
</evidence>
<evidence type="ECO:0000255" key="2"/>
<evidence type="ECO:0000269" key="3">
    <source>
    </source>
</evidence>
<evidence type="ECO:0000269" key="4">
    <source>
    </source>
</evidence>
<evidence type="ECO:0000269" key="5">
    <source ref="7"/>
</evidence>
<evidence type="ECO:0000305" key="6"/>
<evidence type="ECO:0000305" key="7">
    <source>
    </source>
</evidence>
<evidence type="ECO:0000305" key="8">
    <source>
    </source>
</evidence>
<evidence type="ECO:0000312" key="9">
    <source>
        <dbReference type="HGNC" id="HGNC:16085"/>
    </source>
</evidence>
<evidence type="ECO:0007744" key="10">
    <source>
    </source>
</evidence>
<evidence type="ECO:0007744" key="11">
    <source>
    </source>
</evidence>
<gene>
    <name evidence="9" type="primary">SFXN1</name>
</gene>
<protein>
    <recommendedName>
        <fullName evidence="1">Sideroflexin-1</fullName>
    </recommendedName>
</protein>
<reference key="1">
    <citation type="submission" date="2000-12" db="EMBL/GenBank/DDBJ databases">
        <authorList>
            <person name="Li N."/>
            <person name="Chen T."/>
            <person name="Wan T."/>
            <person name="Zhang W."/>
            <person name="Cao X."/>
        </authorList>
    </citation>
    <scope>NUCLEOTIDE SEQUENCE [MRNA]</scope>
</reference>
<reference key="2">
    <citation type="journal article" date="2004" name="Nat. Genet.">
        <title>Complete sequencing and characterization of 21,243 full-length human cDNAs.</title>
        <authorList>
            <person name="Ota T."/>
            <person name="Suzuki Y."/>
            <person name="Nishikawa T."/>
            <person name="Otsuki T."/>
            <person name="Sugiyama T."/>
            <person name="Irie R."/>
            <person name="Wakamatsu A."/>
            <person name="Hayashi K."/>
            <person name="Sato H."/>
            <person name="Nagai K."/>
            <person name="Kimura K."/>
            <person name="Makita H."/>
            <person name="Sekine M."/>
            <person name="Obayashi M."/>
            <person name="Nishi T."/>
            <person name="Shibahara T."/>
            <person name="Tanaka T."/>
            <person name="Ishii S."/>
            <person name="Yamamoto J."/>
            <person name="Saito K."/>
            <person name="Kawai Y."/>
            <person name="Isono Y."/>
            <person name="Nakamura Y."/>
            <person name="Nagahari K."/>
            <person name="Murakami K."/>
            <person name="Yasuda T."/>
            <person name="Iwayanagi T."/>
            <person name="Wagatsuma M."/>
            <person name="Shiratori A."/>
            <person name="Sudo H."/>
            <person name="Hosoiri T."/>
            <person name="Kaku Y."/>
            <person name="Kodaira H."/>
            <person name="Kondo H."/>
            <person name="Sugawara M."/>
            <person name="Takahashi M."/>
            <person name="Kanda K."/>
            <person name="Yokoi T."/>
            <person name="Furuya T."/>
            <person name="Kikkawa E."/>
            <person name="Omura Y."/>
            <person name="Abe K."/>
            <person name="Kamihara K."/>
            <person name="Katsuta N."/>
            <person name="Sato K."/>
            <person name="Tanikawa M."/>
            <person name="Yamazaki M."/>
            <person name="Ninomiya K."/>
            <person name="Ishibashi T."/>
            <person name="Yamashita H."/>
            <person name="Murakawa K."/>
            <person name="Fujimori K."/>
            <person name="Tanai H."/>
            <person name="Kimata M."/>
            <person name="Watanabe M."/>
            <person name="Hiraoka S."/>
            <person name="Chiba Y."/>
            <person name="Ishida S."/>
            <person name="Ono Y."/>
            <person name="Takiguchi S."/>
            <person name="Watanabe S."/>
            <person name="Yosida M."/>
            <person name="Hotuta T."/>
            <person name="Kusano J."/>
            <person name="Kanehori K."/>
            <person name="Takahashi-Fujii A."/>
            <person name="Hara H."/>
            <person name="Tanase T.-O."/>
            <person name="Nomura Y."/>
            <person name="Togiya S."/>
            <person name="Komai F."/>
            <person name="Hara R."/>
            <person name="Takeuchi K."/>
            <person name="Arita M."/>
            <person name="Imose N."/>
            <person name="Musashino K."/>
            <person name="Yuuki H."/>
            <person name="Oshima A."/>
            <person name="Sasaki N."/>
            <person name="Aotsuka S."/>
            <person name="Yoshikawa Y."/>
            <person name="Matsunawa H."/>
            <person name="Ichihara T."/>
            <person name="Shiohata N."/>
            <person name="Sano S."/>
            <person name="Moriya S."/>
            <person name="Momiyama H."/>
            <person name="Satoh N."/>
            <person name="Takami S."/>
            <person name="Terashima Y."/>
            <person name="Suzuki O."/>
            <person name="Nakagawa S."/>
            <person name="Senoh A."/>
            <person name="Mizoguchi H."/>
            <person name="Goto Y."/>
            <person name="Shimizu F."/>
            <person name="Wakebe H."/>
            <person name="Hishigaki H."/>
            <person name="Watanabe T."/>
            <person name="Sugiyama A."/>
            <person name="Takemoto M."/>
            <person name="Kawakami B."/>
            <person name="Yamazaki M."/>
            <person name="Watanabe K."/>
            <person name="Kumagai A."/>
            <person name="Itakura S."/>
            <person name="Fukuzumi Y."/>
            <person name="Fujimori Y."/>
            <person name="Komiyama M."/>
            <person name="Tashiro H."/>
            <person name="Tanigami A."/>
            <person name="Fujiwara T."/>
            <person name="Ono T."/>
            <person name="Yamada K."/>
            <person name="Fujii Y."/>
            <person name="Ozaki K."/>
            <person name="Hirao M."/>
            <person name="Ohmori Y."/>
            <person name="Kawabata A."/>
            <person name="Hikiji T."/>
            <person name="Kobatake N."/>
            <person name="Inagaki H."/>
            <person name="Ikema Y."/>
            <person name="Okamoto S."/>
            <person name="Okitani R."/>
            <person name="Kawakami T."/>
            <person name="Noguchi S."/>
            <person name="Itoh T."/>
            <person name="Shigeta K."/>
            <person name="Senba T."/>
            <person name="Matsumura K."/>
            <person name="Nakajima Y."/>
            <person name="Mizuno T."/>
            <person name="Morinaga M."/>
            <person name="Sasaki M."/>
            <person name="Togashi T."/>
            <person name="Oyama M."/>
            <person name="Hata H."/>
            <person name="Watanabe M."/>
            <person name="Komatsu T."/>
            <person name="Mizushima-Sugano J."/>
            <person name="Satoh T."/>
            <person name="Shirai Y."/>
            <person name="Takahashi Y."/>
            <person name="Nakagawa K."/>
            <person name="Okumura K."/>
            <person name="Nagase T."/>
            <person name="Nomura N."/>
            <person name="Kikuchi H."/>
            <person name="Masuho Y."/>
            <person name="Yamashita R."/>
            <person name="Nakai K."/>
            <person name="Yada T."/>
            <person name="Nakamura Y."/>
            <person name="Ohara O."/>
            <person name="Isogai T."/>
            <person name="Sugano S."/>
        </authorList>
    </citation>
    <scope>NUCLEOTIDE SEQUENCE [LARGE SCALE MRNA]</scope>
    <source>
        <tissue>Mammary gland</tissue>
        <tissue>Prostate</tissue>
        <tissue>Teratocarcinoma</tissue>
    </source>
</reference>
<reference key="3">
    <citation type="journal article" date="2007" name="BMC Genomics">
        <title>The full-ORF clone resource of the German cDNA consortium.</title>
        <authorList>
            <person name="Bechtel S."/>
            <person name="Rosenfelder H."/>
            <person name="Duda A."/>
            <person name="Schmidt C.P."/>
            <person name="Ernst U."/>
            <person name="Wellenreuther R."/>
            <person name="Mehrle A."/>
            <person name="Schuster C."/>
            <person name="Bahr A."/>
            <person name="Bloecker H."/>
            <person name="Heubner D."/>
            <person name="Hoerlein A."/>
            <person name="Michel G."/>
            <person name="Wedler H."/>
            <person name="Koehrer K."/>
            <person name="Ottenwaelder B."/>
            <person name="Poustka A."/>
            <person name="Wiemann S."/>
            <person name="Schupp I."/>
        </authorList>
    </citation>
    <scope>NUCLEOTIDE SEQUENCE [LARGE SCALE MRNA]</scope>
    <source>
        <tissue>Cervix</tissue>
    </source>
</reference>
<reference key="4">
    <citation type="journal article" date="2004" name="Nature">
        <title>The DNA sequence and comparative analysis of human chromosome 5.</title>
        <authorList>
            <person name="Schmutz J."/>
            <person name="Martin J."/>
            <person name="Terry A."/>
            <person name="Couronne O."/>
            <person name="Grimwood J."/>
            <person name="Lowry S."/>
            <person name="Gordon L.A."/>
            <person name="Scott D."/>
            <person name="Xie G."/>
            <person name="Huang W."/>
            <person name="Hellsten U."/>
            <person name="Tran-Gyamfi M."/>
            <person name="She X."/>
            <person name="Prabhakar S."/>
            <person name="Aerts A."/>
            <person name="Altherr M."/>
            <person name="Bajorek E."/>
            <person name="Black S."/>
            <person name="Branscomb E."/>
            <person name="Caoile C."/>
            <person name="Challacombe J.F."/>
            <person name="Chan Y.M."/>
            <person name="Denys M."/>
            <person name="Detter J.C."/>
            <person name="Escobar J."/>
            <person name="Flowers D."/>
            <person name="Fotopulos D."/>
            <person name="Glavina T."/>
            <person name="Gomez M."/>
            <person name="Gonzales E."/>
            <person name="Goodstein D."/>
            <person name="Grigoriev I."/>
            <person name="Groza M."/>
            <person name="Hammon N."/>
            <person name="Hawkins T."/>
            <person name="Haydu L."/>
            <person name="Israni S."/>
            <person name="Jett J."/>
            <person name="Kadner K."/>
            <person name="Kimball H."/>
            <person name="Kobayashi A."/>
            <person name="Lopez F."/>
            <person name="Lou Y."/>
            <person name="Martinez D."/>
            <person name="Medina C."/>
            <person name="Morgan J."/>
            <person name="Nandkeshwar R."/>
            <person name="Noonan J.P."/>
            <person name="Pitluck S."/>
            <person name="Pollard M."/>
            <person name="Predki P."/>
            <person name="Priest J."/>
            <person name="Ramirez L."/>
            <person name="Retterer J."/>
            <person name="Rodriguez A."/>
            <person name="Rogers S."/>
            <person name="Salamov A."/>
            <person name="Salazar A."/>
            <person name="Thayer N."/>
            <person name="Tice H."/>
            <person name="Tsai M."/>
            <person name="Ustaszewska A."/>
            <person name="Vo N."/>
            <person name="Wheeler J."/>
            <person name="Wu K."/>
            <person name="Yang J."/>
            <person name="Dickson M."/>
            <person name="Cheng J.-F."/>
            <person name="Eichler E.E."/>
            <person name="Olsen A."/>
            <person name="Pennacchio L.A."/>
            <person name="Rokhsar D.S."/>
            <person name="Richardson P."/>
            <person name="Lucas S.M."/>
            <person name="Myers R.M."/>
            <person name="Rubin E.M."/>
        </authorList>
    </citation>
    <scope>NUCLEOTIDE SEQUENCE [LARGE SCALE GENOMIC DNA]</scope>
</reference>
<reference key="5">
    <citation type="submission" date="2005-09" db="EMBL/GenBank/DDBJ databases">
        <authorList>
            <person name="Mural R.J."/>
            <person name="Istrail S."/>
            <person name="Sutton G.G."/>
            <person name="Florea L."/>
            <person name="Halpern A.L."/>
            <person name="Mobarry C.M."/>
            <person name="Lippert R."/>
            <person name="Walenz B."/>
            <person name="Shatkay H."/>
            <person name="Dew I."/>
            <person name="Miller J.R."/>
            <person name="Flanigan M.J."/>
            <person name="Edwards N.J."/>
            <person name="Bolanos R."/>
            <person name="Fasulo D."/>
            <person name="Halldorsson B.V."/>
            <person name="Hannenhalli S."/>
            <person name="Turner R."/>
            <person name="Yooseph S."/>
            <person name="Lu F."/>
            <person name="Nusskern D.R."/>
            <person name="Shue B.C."/>
            <person name="Zheng X.H."/>
            <person name="Zhong F."/>
            <person name="Delcher A.L."/>
            <person name="Huson D.H."/>
            <person name="Kravitz S.A."/>
            <person name="Mouchard L."/>
            <person name="Reinert K."/>
            <person name="Remington K.A."/>
            <person name="Clark A.G."/>
            <person name="Waterman M.S."/>
            <person name="Eichler E.E."/>
            <person name="Adams M.D."/>
            <person name="Hunkapiller M.W."/>
            <person name="Myers E.W."/>
            <person name="Venter J.C."/>
        </authorList>
    </citation>
    <scope>NUCLEOTIDE SEQUENCE [LARGE SCALE GENOMIC DNA]</scope>
</reference>
<reference key="6">
    <citation type="journal article" date="2004" name="Genome Res.">
        <title>The status, quality, and expansion of the NIH full-length cDNA project: the Mammalian Gene Collection (MGC).</title>
        <authorList>
            <consortium name="The MGC Project Team"/>
        </authorList>
    </citation>
    <scope>NUCLEOTIDE SEQUENCE [LARGE SCALE MRNA]</scope>
    <source>
        <tissue>Lung</tissue>
        <tissue>PNS</tissue>
    </source>
</reference>
<reference key="7">
    <citation type="submission" date="2005-06" db="UniProtKB">
        <authorList>
            <person name="Bienvenut W.V."/>
        </authorList>
    </citation>
    <scope>PROTEIN SEQUENCE OF 2-12; 16-48; 56-70; 73-86; 137-170; 203-214; 224-233 AND 291-314</scope>
    <scope>CLEAVAGE OF INITIATOR METHIONINE</scope>
    <scope>ACETYLATION AT SER-2</scope>
    <scope>IDENTIFICATION BY MASS SPECTROMETRY</scope>
    <source>
        <tissue>B-cell lymphoma</tissue>
    </source>
</reference>
<reference key="8">
    <citation type="journal article" date="2009" name="Anal. Chem.">
        <title>Lys-N and trypsin cover complementary parts of the phosphoproteome in a refined SCX-based approach.</title>
        <authorList>
            <person name="Gauci S."/>
            <person name="Helbig A.O."/>
            <person name="Slijper M."/>
            <person name="Krijgsveld J."/>
            <person name="Heck A.J."/>
            <person name="Mohammed S."/>
        </authorList>
    </citation>
    <scope>ACETYLATION [LARGE SCALE ANALYSIS] AT SER-2</scope>
    <scope>CLEAVAGE OF INITIATOR METHIONINE [LARGE SCALE ANALYSIS]</scope>
    <scope>IDENTIFICATION BY MASS SPECTROMETRY [LARGE SCALE ANALYSIS]</scope>
</reference>
<reference key="9">
    <citation type="journal article" date="2011" name="BMC Syst. Biol.">
        <title>Initial characterization of the human central proteome.</title>
        <authorList>
            <person name="Burkard T.R."/>
            <person name="Planyavsky M."/>
            <person name="Kaupe I."/>
            <person name="Breitwieser F.P."/>
            <person name="Buerckstuemmer T."/>
            <person name="Bennett K.L."/>
            <person name="Superti-Furga G."/>
            <person name="Colinge J."/>
        </authorList>
    </citation>
    <scope>IDENTIFICATION BY MASS SPECTROMETRY [LARGE SCALE ANALYSIS]</scope>
</reference>
<reference key="10">
    <citation type="journal article" date="2012" name="Proc. Natl. Acad. Sci. U.S.A.">
        <title>N-terminal acetylome analyses and functional insights of the N-terminal acetyltransferase NatB.</title>
        <authorList>
            <person name="Van Damme P."/>
            <person name="Lasa M."/>
            <person name="Polevoda B."/>
            <person name="Gazquez C."/>
            <person name="Elosegui-Artola A."/>
            <person name="Kim D.S."/>
            <person name="De Juan-Pardo E."/>
            <person name="Demeyer K."/>
            <person name="Hole K."/>
            <person name="Larrea E."/>
            <person name="Timmerman E."/>
            <person name="Prieto J."/>
            <person name="Arnesen T."/>
            <person name="Sherman F."/>
            <person name="Gevaert K."/>
            <person name="Aldabe R."/>
        </authorList>
    </citation>
    <scope>ACETYLATION [LARGE SCALE ANALYSIS] AT SER-2</scope>
    <scope>CLEAVAGE OF INITIATOR METHIONINE [LARGE SCALE ANALYSIS]</scope>
    <scope>IDENTIFICATION BY MASS SPECTROMETRY [LARGE SCALE ANALYSIS]</scope>
</reference>
<reference key="11">
    <citation type="journal article" date="2014" name="J. Proteomics">
        <title>An enzyme assisted RP-RPLC approach for in-depth analysis of human liver phosphoproteome.</title>
        <authorList>
            <person name="Bian Y."/>
            <person name="Song C."/>
            <person name="Cheng K."/>
            <person name="Dong M."/>
            <person name="Wang F."/>
            <person name="Huang J."/>
            <person name="Sun D."/>
            <person name="Wang L."/>
            <person name="Ye M."/>
            <person name="Zou H."/>
        </authorList>
    </citation>
    <scope>IDENTIFICATION BY MASS SPECTROMETRY [LARGE SCALE ANALYSIS]</scope>
    <source>
        <tissue>Liver</tissue>
    </source>
</reference>
<reference key="12">
    <citation type="journal article" date="2015" name="Proteomics">
        <title>N-terminome analysis of the human mitochondrial proteome.</title>
        <authorList>
            <person name="Vaca Jacome A.S."/>
            <person name="Rabilloud T."/>
            <person name="Schaeffer-Reiss C."/>
            <person name="Rompais M."/>
            <person name="Ayoub D."/>
            <person name="Lane L."/>
            <person name="Bairoch A."/>
            <person name="Van Dorsselaer A."/>
            <person name="Carapito C."/>
        </authorList>
    </citation>
    <scope>IDENTIFICATION BY MASS SPECTROMETRY [LARGE SCALE ANALYSIS]</scope>
</reference>
<reference key="13">
    <citation type="journal article" date="2016" name="Cell Rep.">
        <title>APEX Fingerprinting Reveals the Subcellular Localization of Proteins of Interest.</title>
        <authorList>
            <person name="Lee S.Y."/>
            <person name="Kang M.G."/>
            <person name="Park J.S."/>
            <person name="Lee G."/>
            <person name="Ting A.Y."/>
            <person name="Rhee H.W."/>
        </authorList>
    </citation>
    <scope>SUBCELLULAR LOCATION</scope>
    <scope>TOPOLOGY</scope>
</reference>
<reference key="14">
    <citation type="journal article" date="2018" name="Science">
        <title>SFXN1 is a mitochondrial serine transporter required for one-carbon metabolism.</title>
        <authorList>
            <person name="Kory N."/>
            <person name="Wyant G.A."/>
            <person name="Prakash G."/>
            <person name="Uit de Bos J."/>
            <person name="Bottanelli F."/>
            <person name="Pacold M.E."/>
            <person name="Chan S.H."/>
            <person name="Lewis C.A."/>
            <person name="Wang T."/>
            <person name="Keys H.R."/>
            <person name="Guo Y.E."/>
            <person name="Sabatini D.M."/>
        </authorList>
    </citation>
    <scope>FUNCTION</scope>
    <scope>CATALYTIC ACTIVITY</scope>
    <scope>SUBCELLULAR LOCATION</scope>
    <scope>TOPOLOGY</scope>
    <scope>BIOPHYSICOCHEMICAL PROPERTIES</scope>
    <scope>TISSUE SPECIFICITY</scope>
</reference>
<organism>
    <name type="scientific">Homo sapiens</name>
    <name type="common">Human</name>
    <dbReference type="NCBI Taxonomy" id="9606"/>
    <lineage>
        <taxon>Eukaryota</taxon>
        <taxon>Metazoa</taxon>
        <taxon>Chordata</taxon>
        <taxon>Craniata</taxon>
        <taxon>Vertebrata</taxon>
        <taxon>Euteleostomi</taxon>
        <taxon>Mammalia</taxon>
        <taxon>Eutheria</taxon>
        <taxon>Euarchontoglires</taxon>
        <taxon>Primates</taxon>
        <taxon>Haplorrhini</taxon>
        <taxon>Catarrhini</taxon>
        <taxon>Hominidae</taxon>
        <taxon>Homo</taxon>
    </lineage>
</organism>
<name>SFXN1_HUMAN</name>
<accession>Q9H9B4</accession>
<accession>B3KPW3</accession>
<accession>D3DQN2</accession>
<accession>Q9HA53</accession>
<dbReference type="EMBL" id="AF327346">
    <property type="protein sequence ID" value="AAL56007.1"/>
    <property type="molecule type" value="mRNA"/>
</dbReference>
<dbReference type="EMBL" id="AK022287">
    <property type="protein sequence ID" value="BAB14003.1"/>
    <property type="status" value="ALT_SEQ"/>
    <property type="molecule type" value="mRNA"/>
</dbReference>
<dbReference type="EMBL" id="AK022938">
    <property type="protein sequence ID" value="BAB14318.1"/>
    <property type="status" value="ALT_INIT"/>
    <property type="molecule type" value="mRNA"/>
</dbReference>
<dbReference type="EMBL" id="AK056915">
    <property type="protein sequence ID" value="BAG51825.1"/>
    <property type="molecule type" value="mRNA"/>
</dbReference>
<dbReference type="EMBL" id="BX648188">
    <property type="status" value="NOT_ANNOTATED_CDS"/>
    <property type="molecule type" value="mRNA"/>
</dbReference>
<dbReference type="EMBL" id="AC091393">
    <property type="status" value="NOT_ANNOTATED_CDS"/>
    <property type="molecule type" value="Genomic_DNA"/>
</dbReference>
<dbReference type="EMBL" id="CH471062">
    <property type="protein sequence ID" value="EAW61370.1"/>
    <property type="molecule type" value="Genomic_DNA"/>
</dbReference>
<dbReference type="EMBL" id="CH471062">
    <property type="protein sequence ID" value="EAW61372.1"/>
    <property type="molecule type" value="Genomic_DNA"/>
</dbReference>
<dbReference type="EMBL" id="CH471062">
    <property type="protein sequence ID" value="EAW61374.1"/>
    <property type="molecule type" value="Genomic_DNA"/>
</dbReference>
<dbReference type="EMBL" id="CH471062">
    <property type="protein sequence ID" value="EAW61375.1"/>
    <property type="molecule type" value="Genomic_DNA"/>
</dbReference>
<dbReference type="EMBL" id="BC020517">
    <property type="protein sequence ID" value="AAH20517.1"/>
    <property type="status" value="ALT_INIT"/>
    <property type="molecule type" value="mRNA"/>
</dbReference>
<dbReference type="EMBL" id="BC063241">
    <property type="protein sequence ID" value="AAH63241.1"/>
    <property type="molecule type" value="mRNA"/>
</dbReference>
<dbReference type="CCDS" id="CCDS4394.1"/>
<dbReference type="RefSeq" id="NP_001309906.1">
    <property type="nucleotide sequence ID" value="NM_001322977.2"/>
</dbReference>
<dbReference type="RefSeq" id="NP_073591.2">
    <property type="nucleotide sequence ID" value="NM_022754.6"/>
</dbReference>
<dbReference type="BioGRID" id="125107">
    <property type="interactions" value="453"/>
</dbReference>
<dbReference type="FunCoup" id="Q9H9B4">
    <property type="interactions" value="1363"/>
</dbReference>
<dbReference type="IntAct" id="Q9H9B4">
    <property type="interactions" value="210"/>
</dbReference>
<dbReference type="MINT" id="Q9H9B4"/>
<dbReference type="STRING" id="9606.ENSP00000316905"/>
<dbReference type="TCDB" id="2.A.54.1.1">
    <property type="family name" value="the sideroflexin (sfxn) family (formerly the mitochondrial tricarboxylate carrier (mtc) family)"/>
</dbReference>
<dbReference type="GlyGen" id="Q9H9B4">
    <property type="glycosylation" value="2 sites, 1 O-linked glycan (2 sites)"/>
</dbReference>
<dbReference type="iPTMnet" id="Q9H9B4"/>
<dbReference type="MetOSite" id="Q9H9B4"/>
<dbReference type="PhosphoSitePlus" id="Q9H9B4"/>
<dbReference type="SwissPalm" id="Q9H9B4"/>
<dbReference type="BioMuta" id="SFXN1"/>
<dbReference type="jPOST" id="Q9H9B4"/>
<dbReference type="MassIVE" id="Q9H9B4"/>
<dbReference type="PaxDb" id="9606-ENSP00000316905"/>
<dbReference type="PeptideAtlas" id="Q9H9B4"/>
<dbReference type="ProteomicsDB" id="81311"/>
<dbReference type="Pumba" id="Q9H9B4"/>
<dbReference type="TopDownProteomics" id="Q9H9B4"/>
<dbReference type="Antibodypedia" id="17087">
    <property type="antibodies" value="168 antibodies from 26 providers"/>
</dbReference>
<dbReference type="DNASU" id="94081"/>
<dbReference type="Ensembl" id="ENST00000321442.10">
    <property type="protein sequence ID" value="ENSP00000316905.5"/>
    <property type="gene ID" value="ENSG00000164466.13"/>
</dbReference>
<dbReference type="GeneID" id="94081"/>
<dbReference type="KEGG" id="hsa:94081"/>
<dbReference type="MANE-Select" id="ENST00000321442.10">
    <property type="protein sequence ID" value="ENSP00000316905.5"/>
    <property type="RefSeq nucleotide sequence ID" value="NM_022754.7"/>
    <property type="RefSeq protein sequence ID" value="NP_073591.2"/>
</dbReference>
<dbReference type="UCSC" id="uc003mda.3">
    <property type="organism name" value="human"/>
</dbReference>
<dbReference type="AGR" id="HGNC:16085"/>
<dbReference type="CTD" id="94081"/>
<dbReference type="DisGeNET" id="94081"/>
<dbReference type="GeneCards" id="SFXN1"/>
<dbReference type="HGNC" id="HGNC:16085">
    <property type="gene designation" value="SFXN1"/>
</dbReference>
<dbReference type="HPA" id="ENSG00000164466">
    <property type="expression patterns" value="Tissue enhanced (liver)"/>
</dbReference>
<dbReference type="MIM" id="615569">
    <property type="type" value="gene"/>
</dbReference>
<dbReference type="neXtProt" id="NX_Q9H9B4"/>
<dbReference type="OpenTargets" id="ENSG00000164466"/>
<dbReference type="PharmGKB" id="PA38090"/>
<dbReference type="VEuPathDB" id="HostDB:ENSG00000164466"/>
<dbReference type="eggNOG" id="KOG3767">
    <property type="taxonomic scope" value="Eukaryota"/>
</dbReference>
<dbReference type="GeneTree" id="ENSGT01030000234641"/>
<dbReference type="HOGENOM" id="CLU_039425_1_0_1"/>
<dbReference type="InParanoid" id="Q9H9B4"/>
<dbReference type="OMA" id="GRVRHCA"/>
<dbReference type="OrthoDB" id="6608471at2759"/>
<dbReference type="PAN-GO" id="Q9H9B4">
    <property type="GO annotations" value="3 GO annotations based on evolutionary models"/>
</dbReference>
<dbReference type="PhylomeDB" id="Q9H9B4"/>
<dbReference type="TreeFam" id="TF313205"/>
<dbReference type="PathwayCommons" id="Q9H9B4"/>
<dbReference type="SABIO-RK" id="Q9H9B4"/>
<dbReference type="SignaLink" id="Q9H9B4"/>
<dbReference type="SIGNOR" id="Q9H9B4"/>
<dbReference type="BioGRID-ORCS" id="94081">
    <property type="hits" value="28 hits in 1165 CRISPR screens"/>
</dbReference>
<dbReference type="CD-CODE" id="FB4E32DD">
    <property type="entry name" value="Presynaptic clusters and postsynaptic densities"/>
</dbReference>
<dbReference type="ChiTaRS" id="SFXN1">
    <property type="organism name" value="human"/>
</dbReference>
<dbReference type="GeneWiki" id="SFXN1"/>
<dbReference type="GenomeRNAi" id="94081"/>
<dbReference type="Pharos" id="Q9H9B4">
    <property type="development level" value="Tbio"/>
</dbReference>
<dbReference type="PRO" id="PR:Q9H9B4"/>
<dbReference type="Proteomes" id="UP000005640">
    <property type="component" value="Chromosome 5"/>
</dbReference>
<dbReference type="RNAct" id="Q9H9B4">
    <property type="molecule type" value="protein"/>
</dbReference>
<dbReference type="Bgee" id="ENSG00000164466">
    <property type="expression patterns" value="Expressed in adrenal tissue and 204 other cell types or tissues"/>
</dbReference>
<dbReference type="ExpressionAtlas" id="Q9H9B4">
    <property type="expression patterns" value="baseline and differential"/>
</dbReference>
<dbReference type="GO" id="GO:0005743">
    <property type="term" value="C:mitochondrial inner membrane"/>
    <property type="evidence" value="ECO:0000314"/>
    <property type="project" value="UniProtKB"/>
</dbReference>
<dbReference type="GO" id="GO:0005739">
    <property type="term" value="C:mitochondrion"/>
    <property type="evidence" value="ECO:0000314"/>
    <property type="project" value="HPA"/>
</dbReference>
<dbReference type="GO" id="GO:0015180">
    <property type="term" value="F:L-alanine transmembrane transporter activity"/>
    <property type="evidence" value="ECO:0000314"/>
    <property type="project" value="UniProtKB"/>
</dbReference>
<dbReference type="GO" id="GO:0015194">
    <property type="term" value="F:L-serine transmembrane transporter activity"/>
    <property type="evidence" value="ECO:0000314"/>
    <property type="project" value="UniProtKB"/>
</dbReference>
<dbReference type="GO" id="GO:0015075">
    <property type="term" value="F:monoatomic ion transmembrane transporter activity"/>
    <property type="evidence" value="ECO:0007669"/>
    <property type="project" value="InterPro"/>
</dbReference>
<dbReference type="GO" id="GO:0022857">
    <property type="term" value="F:transmembrane transporter activity"/>
    <property type="evidence" value="ECO:0000318"/>
    <property type="project" value="GO_Central"/>
</dbReference>
<dbReference type="GO" id="GO:0030218">
    <property type="term" value="P:erythrocyte differentiation"/>
    <property type="evidence" value="ECO:0007669"/>
    <property type="project" value="Ensembl"/>
</dbReference>
<dbReference type="GO" id="GO:0006826">
    <property type="term" value="P:iron ion transport"/>
    <property type="evidence" value="ECO:0007669"/>
    <property type="project" value="Ensembl"/>
</dbReference>
<dbReference type="GO" id="GO:0015808">
    <property type="term" value="P:L-alanine transport"/>
    <property type="evidence" value="ECO:0000314"/>
    <property type="project" value="UniProtKB"/>
</dbReference>
<dbReference type="GO" id="GO:0015825">
    <property type="term" value="P:L-serine transport"/>
    <property type="evidence" value="ECO:0000314"/>
    <property type="project" value="UniProtKB"/>
</dbReference>
<dbReference type="GO" id="GO:0006730">
    <property type="term" value="P:one-carbon metabolic process"/>
    <property type="evidence" value="ECO:0000314"/>
    <property type="project" value="UniProtKB"/>
</dbReference>
<dbReference type="GO" id="GO:0140300">
    <property type="term" value="P:serine import into mitochondrion"/>
    <property type="evidence" value="ECO:0000314"/>
    <property type="project" value="UniProtKB"/>
</dbReference>
<dbReference type="InterPro" id="IPR004686">
    <property type="entry name" value="Mtc"/>
</dbReference>
<dbReference type="NCBIfam" id="TIGR00798">
    <property type="entry name" value="mtc"/>
    <property type="match status" value="1"/>
</dbReference>
<dbReference type="PANTHER" id="PTHR11153">
    <property type="entry name" value="SIDEROFLEXIN"/>
    <property type="match status" value="1"/>
</dbReference>
<dbReference type="PANTHER" id="PTHR11153:SF8">
    <property type="entry name" value="SIDEROFLEXIN-1"/>
    <property type="match status" value="1"/>
</dbReference>
<dbReference type="Pfam" id="PF03820">
    <property type="entry name" value="SFXNs"/>
    <property type="match status" value="1"/>
</dbReference>
<comment type="function">
    <text evidence="4">Amino acid transporter importing serine, an essential substrate of the mitochondrial branch of the one-carbon pathway, into mitochondria. Mitochondrial serine is then converted to glycine and formate, which exits to the cytosol where it is used to generate the charged folates that serve as one-carbon donors (PubMed:30442778). May also transport other amino acids including alanine and cysteine (PubMed:30442778).</text>
</comment>
<comment type="catalytic activity">
    <reaction evidence="4">
        <text>L-serine(in) = L-serine(out)</text>
        <dbReference type="Rhea" id="RHEA:35031"/>
        <dbReference type="ChEBI" id="CHEBI:33384"/>
    </reaction>
</comment>
<comment type="catalytic activity">
    <reaction evidence="4">
        <text>L-alanine(in) = L-alanine(out)</text>
        <dbReference type="Rhea" id="RHEA:70719"/>
        <dbReference type="ChEBI" id="CHEBI:57972"/>
    </reaction>
</comment>
<comment type="catalytic activity">
    <reaction evidence="8">
        <text>L-cysteine(in) = L-cysteine(out)</text>
        <dbReference type="Rhea" id="RHEA:29655"/>
        <dbReference type="ChEBI" id="CHEBI:35235"/>
    </reaction>
</comment>
<comment type="biophysicochemical properties">
    <kinetics>
        <KM evidence="4">170 uM for L-serine</KM>
        <KM evidence="4">371 uM for L-alanine</KM>
    </kinetics>
</comment>
<comment type="interaction">
    <interactant intactId="EBI-355861">
        <id>Q9H9B4</id>
    </interactant>
    <interactant intactId="EBI-13059134">
        <id>Q13520</id>
        <label>AQP6</label>
    </interactant>
    <organismsDiffer>false</organismsDiffer>
    <experiments>3</experiments>
</comment>
<comment type="interaction">
    <interactant intactId="EBI-355861">
        <id>Q9H9B4</id>
    </interactant>
    <interactant intactId="EBI-7062247">
        <id>Q9UHD4</id>
        <label>CIDEB</label>
    </interactant>
    <organismsDiffer>false</organismsDiffer>
    <experiments>3</experiments>
</comment>
<comment type="interaction">
    <interactant intactId="EBI-355861">
        <id>Q9H9B4</id>
    </interactant>
    <interactant intactId="EBI-748248">
        <id>Q8WTU0</id>
        <label>DDI1</label>
    </interactant>
    <organismsDiffer>false</organismsDiffer>
    <experiments>2</experiments>
</comment>
<comment type="interaction">
    <interactant intactId="EBI-355861">
        <id>Q9H9B4</id>
    </interactant>
    <interactant intactId="EBI-18053395">
        <id>Q7Z5P4</id>
        <label>HSD17B13</label>
    </interactant>
    <organismsDiffer>false</organismsDiffer>
    <experiments>3</experiments>
</comment>
<comment type="interaction">
    <interactant intactId="EBI-355861">
        <id>Q9H9B4</id>
    </interactant>
    <interactant intactId="EBI-17873222">
        <id>Q15546</id>
        <label>MMD</label>
    </interactant>
    <organismsDiffer>false</organismsDiffer>
    <experiments>3</experiments>
</comment>
<comment type="interaction">
    <interactant intactId="EBI-355861">
        <id>Q9H9B4</id>
    </interactant>
    <interactant intactId="EBI-1050125">
        <id>O15173</id>
        <label>PGRMC2</label>
    </interactant>
    <organismsDiffer>false</organismsDiffer>
    <experiments>3</experiments>
</comment>
<comment type="interaction">
    <interactant intactId="EBI-355861">
        <id>Q9H9B4</id>
    </interactant>
    <interactant intactId="EBI-7545592">
        <id>Q9H6H4</id>
        <label>REEP4</label>
    </interactant>
    <organismsDiffer>false</organismsDiffer>
    <experiments>3</experiments>
</comment>
<comment type="interaction">
    <interactant intactId="EBI-355861">
        <id>Q9H9B4</id>
    </interactant>
    <interactant intactId="EBI-17247926">
        <id>Q9NY72</id>
        <label>SCN3B</label>
    </interactant>
    <organismsDiffer>false</organismsDiffer>
    <experiments>3</experiments>
</comment>
<comment type="interaction">
    <interactant intactId="EBI-355861">
        <id>Q9H9B4</id>
    </interactant>
    <interactant intactId="EBI-3923031">
        <id>Q14973</id>
        <label>SLC10A1</label>
    </interactant>
    <organismsDiffer>false</organismsDiffer>
    <experiments>3</experiments>
</comment>
<comment type="interaction">
    <interactant intactId="EBI-355861">
        <id>Q9H9B4</id>
    </interactant>
    <interactant intactId="EBI-18159983">
        <id>Q3KNW5</id>
        <label>SLC10A6</label>
    </interactant>
    <organismsDiffer>false</organismsDiffer>
    <experiments>3</experiments>
</comment>
<comment type="interaction">
    <interactant intactId="EBI-355861">
        <id>Q9H9B4</id>
    </interactant>
    <interactant intactId="EBI-3921243">
        <id>O60669</id>
        <label>SLC16A7</label>
    </interactant>
    <organismsDiffer>false</organismsDiffer>
    <experiments>3</experiments>
</comment>
<comment type="interaction">
    <interactant intactId="EBI-355861">
        <id>Q9H9B4</id>
    </interactant>
    <interactant intactId="EBI-1211440">
        <id>P27105</id>
        <label>STOM</label>
    </interactant>
    <organismsDiffer>false</organismsDiffer>
    <experiments>3</experiments>
</comment>
<comment type="interaction">
    <interactant intactId="EBI-355861">
        <id>Q9H9B4</id>
    </interactant>
    <interactant intactId="EBI-12947623">
        <id>Q96MV1</id>
        <label>TLCD4</label>
    </interactant>
    <organismsDiffer>false</organismsDiffer>
    <experiments>3</experiments>
</comment>
<comment type="interaction">
    <interactant intactId="EBI-355861">
        <id>Q9H9B4</id>
    </interactant>
    <interactant intactId="EBI-8638294">
        <id>Q9NUH8</id>
        <label>TMEM14B</label>
    </interactant>
    <organismsDiffer>false</organismsDiffer>
    <experiments>3</experiments>
</comment>
<comment type="interaction">
    <interactant intactId="EBI-355861">
        <id>Q9H9B4</id>
    </interactant>
    <interactant intactId="EBI-6447886">
        <id>Q9Y320</id>
        <label>TMX2</label>
    </interactant>
    <organismsDiffer>false</organismsDiffer>
    <experiments>3</experiments>
</comment>
<comment type="subcellular location">
    <subcellularLocation>
        <location evidence="3 4">Mitochondrion inner membrane</location>
        <topology evidence="2">Multi-pass membrane protein</topology>
    </subcellularLocation>
</comment>
<comment type="tissue specificity">
    <text evidence="4">Highly expressed in tissues with high one-carbon metabolism activity, such as blood, liver and kidney.</text>
</comment>
<comment type="similarity">
    <text evidence="6">Belongs to the sideroflexin family.</text>
</comment>
<comment type="sequence caution" evidence="6">
    <conflict type="erroneous initiation">
        <sequence resource="EMBL-CDS" id="AAH20517"/>
    </conflict>
    <text>Truncated N-terminus.</text>
</comment>
<comment type="sequence caution" evidence="6">
    <conflict type="miscellaneous discrepancy">
        <sequence resource="EMBL-CDS" id="BAB14003"/>
    </conflict>
    <text>Cloning artifact.</text>
</comment>
<comment type="sequence caution" evidence="6">
    <conflict type="erroneous initiation">
        <sequence resource="EMBL-CDS" id="BAB14318"/>
    </conflict>
    <text>Truncated N-terminus.</text>
</comment>
<keyword id="KW-0007">Acetylation</keyword>
<keyword id="KW-0029">Amino-acid transport</keyword>
<keyword id="KW-0903">Direct protein sequencing</keyword>
<keyword id="KW-0472">Membrane</keyword>
<keyword id="KW-0496">Mitochondrion</keyword>
<keyword id="KW-0999">Mitochondrion inner membrane</keyword>
<keyword id="KW-0554">One-carbon metabolism</keyword>
<keyword id="KW-1267">Proteomics identification</keyword>
<keyword id="KW-1185">Reference proteome</keyword>
<keyword id="KW-0812">Transmembrane</keyword>
<keyword id="KW-1133">Transmembrane helix</keyword>
<keyword id="KW-0813">Transport</keyword>